<gene>
    <name evidence="1" type="primary">asnA</name>
    <name type="ordered locus">SPN23F19910</name>
</gene>
<evidence type="ECO:0000255" key="1">
    <source>
        <dbReference type="HAMAP-Rule" id="MF_00555"/>
    </source>
</evidence>
<feature type="chain" id="PRO_1000146699" description="Aspartate--ammonia ligase">
    <location>
        <begin position="1"/>
        <end position="330"/>
    </location>
</feature>
<keyword id="KW-0028">Amino-acid biosynthesis</keyword>
<keyword id="KW-0061">Asparagine biosynthesis</keyword>
<keyword id="KW-0067">ATP-binding</keyword>
<keyword id="KW-0963">Cytoplasm</keyword>
<keyword id="KW-0436">Ligase</keyword>
<keyword id="KW-0547">Nucleotide-binding</keyword>
<proteinExistence type="inferred from homology"/>
<comment type="catalytic activity">
    <reaction evidence="1">
        <text>L-aspartate + NH4(+) + ATP = L-asparagine + AMP + diphosphate + H(+)</text>
        <dbReference type="Rhea" id="RHEA:11372"/>
        <dbReference type="ChEBI" id="CHEBI:15378"/>
        <dbReference type="ChEBI" id="CHEBI:28938"/>
        <dbReference type="ChEBI" id="CHEBI:29991"/>
        <dbReference type="ChEBI" id="CHEBI:30616"/>
        <dbReference type="ChEBI" id="CHEBI:33019"/>
        <dbReference type="ChEBI" id="CHEBI:58048"/>
        <dbReference type="ChEBI" id="CHEBI:456215"/>
        <dbReference type="EC" id="6.3.1.1"/>
    </reaction>
</comment>
<comment type="pathway">
    <text evidence="1">Amino-acid biosynthesis; L-asparagine biosynthesis; L-asparagine from L-aspartate (ammonia route): step 1/1.</text>
</comment>
<comment type="subcellular location">
    <subcellularLocation>
        <location evidence="1">Cytoplasm</location>
    </subcellularLocation>
</comment>
<comment type="similarity">
    <text evidence="1">Belongs to the class-II aminoacyl-tRNA synthetase family. AsnA subfamily.</text>
</comment>
<sequence>MKKSFIHQQEEISFVKNTFTQYLKDKLEVVEVQGPILSKVGDGMQDNLSGVENPVSVKVLQIPDATYEVVHSLAKWKRHTLARFGFGEGEGLFVHMKALRPDEDSLDATHSVYVDQWDWEKVIPNGKRNIVYLKETVEKIYKAIRLTELAVEARYDIESILPKQITFIHTEELVERYPDLTPKERENAICKEFGAVFLIGIGGELPDGKPHDGRAPDYDDWTSESENGYKGLNGDILVWNESLGGAFELSSMGIRVDEETLRRQVEITGDEDRLELEWHKSLLNGLFPLTIGGGIGQSRMAMFLLRKRHIGEVQTSVWPQEVRDTYENIL</sequence>
<accession>B8ZNX6</accession>
<protein>
    <recommendedName>
        <fullName evidence="1">Aspartate--ammonia ligase</fullName>
        <ecNumber evidence="1">6.3.1.1</ecNumber>
    </recommendedName>
    <alternativeName>
        <fullName evidence="1">Asparagine synthetase A</fullName>
    </alternativeName>
</protein>
<name>ASNA_STRPJ</name>
<organism>
    <name type="scientific">Streptococcus pneumoniae (strain ATCC 700669 / Spain 23F-1)</name>
    <dbReference type="NCBI Taxonomy" id="561276"/>
    <lineage>
        <taxon>Bacteria</taxon>
        <taxon>Bacillati</taxon>
        <taxon>Bacillota</taxon>
        <taxon>Bacilli</taxon>
        <taxon>Lactobacillales</taxon>
        <taxon>Streptococcaceae</taxon>
        <taxon>Streptococcus</taxon>
    </lineage>
</organism>
<reference key="1">
    <citation type="journal article" date="2009" name="J. Bacteriol.">
        <title>Role of conjugative elements in the evolution of the multidrug-resistant pandemic clone Streptococcus pneumoniae Spain23F ST81.</title>
        <authorList>
            <person name="Croucher N.J."/>
            <person name="Walker D."/>
            <person name="Romero P."/>
            <person name="Lennard N."/>
            <person name="Paterson G.K."/>
            <person name="Bason N.C."/>
            <person name="Mitchell A.M."/>
            <person name="Quail M.A."/>
            <person name="Andrew P.W."/>
            <person name="Parkhill J."/>
            <person name="Bentley S.D."/>
            <person name="Mitchell T.J."/>
        </authorList>
    </citation>
    <scope>NUCLEOTIDE SEQUENCE [LARGE SCALE GENOMIC DNA]</scope>
    <source>
        <strain>ATCC 700669 / Spain 23F-1</strain>
    </source>
</reference>
<dbReference type="EC" id="6.3.1.1" evidence="1"/>
<dbReference type="EMBL" id="FM211187">
    <property type="protein sequence ID" value="CAR69742.1"/>
    <property type="molecule type" value="Genomic_DNA"/>
</dbReference>
<dbReference type="RefSeq" id="WP_000747993.1">
    <property type="nucleotide sequence ID" value="NC_011900.1"/>
</dbReference>
<dbReference type="SMR" id="B8ZNX6"/>
<dbReference type="GeneID" id="45652817"/>
<dbReference type="KEGG" id="sne:SPN23F19910"/>
<dbReference type="HOGENOM" id="CLU_071543_0_0_9"/>
<dbReference type="UniPathway" id="UPA00134">
    <property type="reaction ID" value="UER00194"/>
</dbReference>
<dbReference type="GO" id="GO:0005829">
    <property type="term" value="C:cytosol"/>
    <property type="evidence" value="ECO:0007669"/>
    <property type="project" value="TreeGrafter"/>
</dbReference>
<dbReference type="GO" id="GO:0004071">
    <property type="term" value="F:aspartate-ammonia ligase activity"/>
    <property type="evidence" value="ECO:0007669"/>
    <property type="project" value="UniProtKB-UniRule"/>
</dbReference>
<dbReference type="GO" id="GO:0005524">
    <property type="term" value="F:ATP binding"/>
    <property type="evidence" value="ECO:0007669"/>
    <property type="project" value="UniProtKB-UniRule"/>
</dbReference>
<dbReference type="GO" id="GO:0140096">
    <property type="term" value="F:catalytic activity, acting on a protein"/>
    <property type="evidence" value="ECO:0007669"/>
    <property type="project" value="UniProtKB-ARBA"/>
</dbReference>
<dbReference type="GO" id="GO:0016740">
    <property type="term" value="F:transferase activity"/>
    <property type="evidence" value="ECO:0007669"/>
    <property type="project" value="UniProtKB-ARBA"/>
</dbReference>
<dbReference type="GO" id="GO:0070981">
    <property type="term" value="P:L-asparagine biosynthetic process"/>
    <property type="evidence" value="ECO:0007669"/>
    <property type="project" value="UniProtKB-UniRule"/>
</dbReference>
<dbReference type="CDD" id="cd00645">
    <property type="entry name" value="AsnA"/>
    <property type="match status" value="1"/>
</dbReference>
<dbReference type="Gene3D" id="3.30.930.10">
    <property type="entry name" value="Bira Bifunctional Protein, Domain 2"/>
    <property type="match status" value="1"/>
</dbReference>
<dbReference type="HAMAP" id="MF_00555">
    <property type="entry name" value="AsnA"/>
    <property type="match status" value="1"/>
</dbReference>
<dbReference type="InterPro" id="IPR006195">
    <property type="entry name" value="aa-tRNA-synth_II"/>
</dbReference>
<dbReference type="InterPro" id="IPR045864">
    <property type="entry name" value="aa-tRNA-synth_II/BPL/LPL"/>
</dbReference>
<dbReference type="InterPro" id="IPR004618">
    <property type="entry name" value="AsnA"/>
</dbReference>
<dbReference type="NCBIfam" id="TIGR00669">
    <property type="entry name" value="asnA"/>
    <property type="match status" value="1"/>
</dbReference>
<dbReference type="PANTHER" id="PTHR30073">
    <property type="entry name" value="ASPARTATE--AMMONIA LIGASE"/>
    <property type="match status" value="1"/>
</dbReference>
<dbReference type="PANTHER" id="PTHR30073:SF5">
    <property type="entry name" value="ASPARTATE--AMMONIA LIGASE"/>
    <property type="match status" value="1"/>
</dbReference>
<dbReference type="Pfam" id="PF03590">
    <property type="entry name" value="AsnA"/>
    <property type="match status" value="1"/>
</dbReference>
<dbReference type="PIRSF" id="PIRSF001555">
    <property type="entry name" value="Asp_ammon_ligase"/>
    <property type="match status" value="1"/>
</dbReference>
<dbReference type="SUPFAM" id="SSF55681">
    <property type="entry name" value="Class II aaRS and biotin synthetases"/>
    <property type="match status" value="1"/>
</dbReference>
<dbReference type="PROSITE" id="PS50862">
    <property type="entry name" value="AA_TRNA_LIGASE_II"/>
    <property type="match status" value="1"/>
</dbReference>